<sequence>KGKTITHGQSWGARRIHSHFYITIFTITCIRIGQYKLALYLDPYRFYNITGSQIVRLKGQRPEYRKRIFAHSYRHSSRIGLNFPSRRRYSNYVDRGNIHKHTRLPPQFIGLNTVESAQPSILRDFVDLRGGHTVISKILIANNGIAAVKEMRSIRKWAYETFNDEKIIQFVVMATPDDLHANSEYIRMADQYVQVPGGTNNNNYANIDLILDVAEQTDVDAVWAGWGHASENPCLPELLASSQRKILFIGPPGRAMRSLGDKISSTIVAQSAKIPCIPWSGSHIDTIHIDNKTNFVSVPDDVYVRGCCSSPEDALEKAKLIGFPVMIKASEGGGGKGIRRVDNQDDFIALYRQAVNETPGSPMFVMKVVTDARHLEVQLLADQYGTNITLFGRDCSIQRRHQKIIEEAPVTITKPETFQRMERAAIRLGELVGYVSAGTVEYLYSPKDDKFYFLELNPRLQVEHPTTEMISGVNLPATQLQIAMGIPMHMISDIRKLYGLDPTGTSYIDFKNLKRPSPKGHCISCRITSEDPNEGFKPSTGKIHELNFRSSSNVWGYFSVGNNGAIHSFSDSQFGHIFAVGNDRQDAKQNMVLALKDFSIRGEFKTPIEYLIELLETRDFESNNISTGWLDDLILKNLSSDSKLDPTLAIICGAAMKAYVFTEKVRNKYLELLRRGQVPPKDFLKTKFPVDFIFDNNRYLFNVAQSSEEQFILSINKSQCEVNVQKLSSDCLLISVDGKCHTVYWKDDIRGTRLSIDSNTIFLEAELNPTQVISPTPGKLVKYLVRSGDHVFAGQQYAEIEIMKMQMPLVAKSDGVIELLRQPGSIIEAGDVIAKLTLDSPSKANESSLYRGELPVLGPPLIEGSRPNHKLRVLINRLENILNGYHENSGIETTLKELIKILRDGRLPYSEWDSQISTVRNRLPRQLNEGLGNLVKKSVSFPAKELHKLMKRYLEENTNDHVVYVALQPLLKISERYSEGLANHECEIFLKLIKKYYAVEKIFENHDIHEERNLLNLRRKDLTNLKEILCISLSHANIVAKNKLVTAILHEYEPLCQDSSKMSLKFRAVIHDLASLESKWAKEVSVKARSVLLRGIFPPIKKRKEHIKTLLQLHIKDTGAENIHSRNIYSCMRDFGNLIHSNLIQLQDLFFFFGHQDTALSSIASEIYARYAYGNYQLKSIKIHKGAPDLLMSWQFSSLRNYLVNPDGESDGFTKLSKPPSTSGKSSANSFGLLVNMRALESLEKTLDEVYEQIHIPEERLSSGENSLIVNILSPIRYRSENDLIKTLKIKLHENERGLSKLKVNRITFAFIAANAPAVKFYSFDGTTYDEIPQIRNMDPSYEAPLELGKMSNYKIRSLPTYDSSIRIFEGISKFTPLDKRFFVRKIINSFMYNDQKTTEENLKAEINAQVVYMLEHLGAVDISNSDLNHIFLSFNTVLNIPVHRLEEIVSTILKTHETRLFQERITDVEICISVECLETKKPAPLRLLISNKSGYVVKIETYYEKIGKNGNLILEPCSEQSHYSQKSLSLPYSVKDWLQPKRYKAQFMGTTYVYDFPGLFHQAAIQQWKRYFPKHKLNDSFFSWVELIEQNGNLIKVNREPGLNNIGMVAFEIMVQTPEYPEGRNMIVISNDITYNIGSFGPREDLFFDRVTNYARERGIPRIYLAANSGAKLGIAEELIPLFRVAWNDPSDPTKGFQYLYLAPKDMQLLKDSGKGNSVVVEHKMVYGEERYIIKAIVGFEEGLGVECLQGSGLIAGATSKAYRDIFTITAVTCRSVGIGSYLVRLGQRTIQVEDKPIILTGASAINKVLGTDIYTSNLQIGGTQIMYKNGIAHLTASNDMKAIEKIMTWLSYVPAKRDMSPPLLETMDRWDRDVDFKPAKQVPYEARWLIEGKWDSNNNFQSGLFDKDSFFETLSGWAKGVIVGRARLGGIPVGVIAVETKTIEEIIPADPANLDSSEFSVKEAGQVWYPNSAFKTAQTINDFNYGEQLPLIILANWRGFSGGQRDMYNEVLKYGSFIVDALVDYKQPILIYIPPFGELRGGSWVVIDPTINPEQMEMYADVESRGGVLEPDGVVSIKYRKEKMIETMIRLDSTYGHLRRTLTEKKLSLEKQNDLTKRLKIRERQLIPIYNQISIQFADLHDRSTRMLVKGVIRNELEWKKSRRFLYWRLRRRLNEGQVIKRLQKKTCDNKTKMKYDDLLKIVQSWYNDLDVNDDRAVVEFIERNSKKIGKNVEEFEISLLIDELKKKFEDRRGNIALEELTRLVDSKRKR</sequence>
<reference key="1">
    <citation type="journal article" date="2009" name="Genome Res.">
        <title>Genome structure of a Saccharomyces cerevisiae strain widely used in bioethanol production.</title>
        <authorList>
            <person name="Argueso J.L."/>
            <person name="Carazzolle M.F."/>
            <person name="Mieczkowski P.A."/>
            <person name="Duarte F.M."/>
            <person name="Netto O.V.C."/>
            <person name="Missawa S.K."/>
            <person name="Galzerani F."/>
            <person name="Costa G.G.L."/>
            <person name="Vidal R.O."/>
            <person name="Noronha M.F."/>
            <person name="Dominska M."/>
            <person name="Andrietta M.G.S."/>
            <person name="Andrietta S.R."/>
            <person name="Cunha A.F."/>
            <person name="Gomes L.H."/>
            <person name="Tavares F.C.A."/>
            <person name="Alcarde A.R."/>
            <person name="Dietrich F.S."/>
            <person name="McCusker J.H."/>
            <person name="Petes T.D."/>
            <person name="Pereira G.A.G."/>
        </authorList>
    </citation>
    <scope>NUCLEOTIDE SEQUENCE [LARGE SCALE GENOMIC DNA]</scope>
    <source>
        <strain>JAY291</strain>
    </source>
</reference>
<evidence type="ECO:0000250" key="1"/>
<evidence type="ECO:0000255" key="2"/>
<evidence type="ECO:0000255" key="3">
    <source>
        <dbReference type="PROSITE-ProRule" id="PRU00409"/>
    </source>
</evidence>
<evidence type="ECO:0000255" key="4">
    <source>
        <dbReference type="PROSITE-ProRule" id="PRU01066"/>
    </source>
</evidence>
<evidence type="ECO:0000255" key="5">
    <source>
        <dbReference type="PROSITE-ProRule" id="PRU01136"/>
    </source>
</evidence>
<evidence type="ECO:0000255" key="6">
    <source>
        <dbReference type="PROSITE-ProRule" id="PRU01137"/>
    </source>
</evidence>
<evidence type="ECO:0000255" key="7">
    <source>
        <dbReference type="PROSITE-ProRule" id="PRU01138"/>
    </source>
</evidence>
<evidence type="ECO:0000305" key="8"/>
<dbReference type="EC" id="6.4.1.2"/>
<dbReference type="EC" id="6.3.4.14"/>
<dbReference type="EMBL" id="ACFL01000141">
    <property type="protein sequence ID" value="EEU06674.1"/>
    <property type="status" value="ALT_INIT"/>
    <property type="molecule type" value="Genomic_DNA"/>
</dbReference>
<dbReference type="SMR" id="C7GRE4"/>
<dbReference type="OrthoDB" id="24338at4893"/>
<dbReference type="UniPathway" id="UPA00655">
    <property type="reaction ID" value="UER00711"/>
</dbReference>
<dbReference type="Proteomes" id="UP000008073">
    <property type="component" value="Unassembled WGS sequence"/>
</dbReference>
<dbReference type="GO" id="GO:0005739">
    <property type="term" value="C:mitochondrion"/>
    <property type="evidence" value="ECO:0007669"/>
    <property type="project" value="UniProtKB-SubCell"/>
</dbReference>
<dbReference type="GO" id="GO:0003989">
    <property type="term" value="F:acetyl-CoA carboxylase activity"/>
    <property type="evidence" value="ECO:0007669"/>
    <property type="project" value="UniProtKB-EC"/>
</dbReference>
<dbReference type="GO" id="GO:0005524">
    <property type="term" value="F:ATP binding"/>
    <property type="evidence" value="ECO:0007669"/>
    <property type="project" value="UniProtKB-KW"/>
</dbReference>
<dbReference type="GO" id="GO:0004075">
    <property type="term" value="F:biotin carboxylase activity"/>
    <property type="evidence" value="ECO:0007669"/>
    <property type="project" value="UniProtKB-EC"/>
</dbReference>
<dbReference type="GO" id="GO:0046872">
    <property type="term" value="F:metal ion binding"/>
    <property type="evidence" value="ECO:0007669"/>
    <property type="project" value="InterPro"/>
</dbReference>
<dbReference type="GO" id="GO:0006633">
    <property type="term" value="P:fatty acid biosynthetic process"/>
    <property type="evidence" value="ECO:0007669"/>
    <property type="project" value="UniProtKB-KW"/>
</dbReference>
<dbReference type="GO" id="GO:2001295">
    <property type="term" value="P:malonyl-CoA biosynthetic process"/>
    <property type="evidence" value="ECO:0007669"/>
    <property type="project" value="UniProtKB-UniPathway"/>
</dbReference>
<dbReference type="CDD" id="cd06850">
    <property type="entry name" value="biotinyl_domain"/>
    <property type="match status" value="1"/>
</dbReference>
<dbReference type="FunFam" id="2.40.460.10:FF:000001">
    <property type="entry name" value="Acetyl-CoA carboxylase 1"/>
    <property type="match status" value="1"/>
</dbReference>
<dbReference type="FunFam" id="2.40.50.100:FF:000005">
    <property type="entry name" value="Acetyl-CoA carboxylase 1"/>
    <property type="match status" value="1"/>
</dbReference>
<dbReference type="FunFam" id="3.90.1770.10:FF:000001">
    <property type="entry name" value="acetyl-CoA carboxylase 1"/>
    <property type="match status" value="1"/>
</dbReference>
<dbReference type="FunFam" id="3.30.1490.20:FF:000003">
    <property type="entry name" value="acetyl-CoA carboxylase isoform X1"/>
    <property type="match status" value="1"/>
</dbReference>
<dbReference type="FunFam" id="3.40.50.20:FF:000005">
    <property type="entry name" value="acetyl-CoA carboxylase isoform X2"/>
    <property type="match status" value="1"/>
</dbReference>
<dbReference type="FunFam" id="3.90.226.10:FF:000010">
    <property type="entry name" value="acetyl-CoA carboxylase isoform X2"/>
    <property type="match status" value="1"/>
</dbReference>
<dbReference type="Gene3D" id="2.40.50.100">
    <property type="match status" value="1"/>
</dbReference>
<dbReference type="Gene3D" id="3.40.50.20">
    <property type="match status" value="1"/>
</dbReference>
<dbReference type="Gene3D" id="3.90.226.10">
    <property type="entry name" value="2-enoyl-CoA Hydratase, Chain A, domain 1"/>
    <property type="match status" value="2"/>
</dbReference>
<dbReference type="Gene3D" id="3.30.1490.20">
    <property type="entry name" value="ATP-grasp fold, A domain"/>
    <property type="match status" value="1"/>
</dbReference>
<dbReference type="Gene3D" id="3.30.470.20">
    <property type="entry name" value="ATP-grasp fold, B domain"/>
    <property type="match status" value="1"/>
</dbReference>
<dbReference type="Gene3D" id="2.40.460.10">
    <property type="entry name" value="Biotin dependent carboxylase carboxyltransferase"/>
    <property type="match status" value="1"/>
</dbReference>
<dbReference type="Gene3D" id="3.90.1770.10">
    <property type="entry name" value="PreATP-grasp domain"/>
    <property type="match status" value="1"/>
</dbReference>
<dbReference type="InterPro" id="IPR049076">
    <property type="entry name" value="ACCA"/>
</dbReference>
<dbReference type="InterPro" id="IPR049074">
    <property type="entry name" value="ACCA_BT"/>
</dbReference>
<dbReference type="InterPro" id="IPR034733">
    <property type="entry name" value="AcCoA_carboxyl_beta"/>
</dbReference>
<dbReference type="InterPro" id="IPR013537">
    <property type="entry name" value="AcCoA_COase_cen"/>
</dbReference>
<dbReference type="InterPro" id="IPR011761">
    <property type="entry name" value="ATP-grasp"/>
</dbReference>
<dbReference type="InterPro" id="IPR013815">
    <property type="entry name" value="ATP_grasp_subdomain_1"/>
</dbReference>
<dbReference type="InterPro" id="IPR005481">
    <property type="entry name" value="BC-like_N"/>
</dbReference>
<dbReference type="InterPro" id="IPR001882">
    <property type="entry name" value="Biotin_BS"/>
</dbReference>
<dbReference type="InterPro" id="IPR011764">
    <property type="entry name" value="Biotin_carboxylation_dom"/>
</dbReference>
<dbReference type="InterPro" id="IPR005482">
    <property type="entry name" value="Biotin_COase_C"/>
</dbReference>
<dbReference type="InterPro" id="IPR000089">
    <property type="entry name" value="Biotin_lipoyl"/>
</dbReference>
<dbReference type="InterPro" id="IPR005479">
    <property type="entry name" value="CbamoylP_synth_lsu-like_ATP-bd"/>
</dbReference>
<dbReference type="InterPro" id="IPR029045">
    <property type="entry name" value="ClpP/crotonase-like_dom_sf"/>
</dbReference>
<dbReference type="InterPro" id="IPR011763">
    <property type="entry name" value="COA_CT_C"/>
</dbReference>
<dbReference type="InterPro" id="IPR011762">
    <property type="entry name" value="COA_CT_N"/>
</dbReference>
<dbReference type="InterPro" id="IPR016185">
    <property type="entry name" value="PreATP-grasp_dom_sf"/>
</dbReference>
<dbReference type="InterPro" id="IPR011054">
    <property type="entry name" value="Rudment_hybrid_motif"/>
</dbReference>
<dbReference type="InterPro" id="IPR011053">
    <property type="entry name" value="Single_hybrid_motif"/>
</dbReference>
<dbReference type="PANTHER" id="PTHR45728:SF3">
    <property type="entry name" value="ACETYL-COA CARBOXYLASE"/>
    <property type="match status" value="1"/>
</dbReference>
<dbReference type="PANTHER" id="PTHR45728">
    <property type="entry name" value="ACETYL-COA CARBOXYLASE, ISOFORM A"/>
    <property type="match status" value="1"/>
</dbReference>
<dbReference type="Pfam" id="PF08326">
    <property type="entry name" value="ACC_central"/>
    <property type="match status" value="1"/>
</dbReference>
<dbReference type="Pfam" id="PF21385">
    <property type="entry name" value="ACCA_BT"/>
    <property type="match status" value="1"/>
</dbReference>
<dbReference type="Pfam" id="PF02785">
    <property type="entry name" value="Biotin_carb_C"/>
    <property type="match status" value="1"/>
</dbReference>
<dbReference type="Pfam" id="PF00289">
    <property type="entry name" value="Biotin_carb_N"/>
    <property type="match status" value="1"/>
</dbReference>
<dbReference type="Pfam" id="PF00364">
    <property type="entry name" value="Biotin_lipoyl"/>
    <property type="match status" value="1"/>
</dbReference>
<dbReference type="Pfam" id="PF01039">
    <property type="entry name" value="Carboxyl_trans"/>
    <property type="match status" value="1"/>
</dbReference>
<dbReference type="Pfam" id="PF02786">
    <property type="entry name" value="CPSase_L_D2"/>
    <property type="match status" value="1"/>
</dbReference>
<dbReference type="SMART" id="SM00878">
    <property type="entry name" value="Biotin_carb_C"/>
    <property type="match status" value="1"/>
</dbReference>
<dbReference type="SUPFAM" id="SSF52096">
    <property type="entry name" value="ClpP/crotonase"/>
    <property type="match status" value="2"/>
</dbReference>
<dbReference type="SUPFAM" id="SSF56059">
    <property type="entry name" value="Glutathione synthetase ATP-binding domain-like"/>
    <property type="match status" value="1"/>
</dbReference>
<dbReference type="SUPFAM" id="SSF52440">
    <property type="entry name" value="PreATP-grasp domain"/>
    <property type="match status" value="1"/>
</dbReference>
<dbReference type="SUPFAM" id="SSF51246">
    <property type="entry name" value="Rudiment single hybrid motif"/>
    <property type="match status" value="1"/>
</dbReference>
<dbReference type="SUPFAM" id="SSF51230">
    <property type="entry name" value="Single hybrid motif"/>
    <property type="match status" value="1"/>
</dbReference>
<dbReference type="PROSITE" id="PS50975">
    <property type="entry name" value="ATP_GRASP"/>
    <property type="match status" value="1"/>
</dbReference>
<dbReference type="PROSITE" id="PS50979">
    <property type="entry name" value="BC"/>
    <property type="match status" value="1"/>
</dbReference>
<dbReference type="PROSITE" id="PS00188">
    <property type="entry name" value="BIOTIN"/>
    <property type="match status" value="1"/>
</dbReference>
<dbReference type="PROSITE" id="PS50968">
    <property type="entry name" value="BIOTINYL_LIPOYL"/>
    <property type="match status" value="1"/>
</dbReference>
<dbReference type="PROSITE" id="PS50989">
    <property type="entry name" value="COA_CT_CTER"/>
    <property type="match status" value="1"/>
</dbReference>
<dbReference type="PROSITE" id="PS50980">
    <property type="entry name" value="COA_CT_NTER"/>
    <property type="match status" value="1"/>
</dbReference>
<dbReference type="PROSITE" id="PS00866">
    <property type="entry name" value="CPSASE_1"/>
    <property type="match status" value="1"/>
</dbReference>
<dbReference type="PROSITE" id="PS00867">
    <property type="entry name" value="CPSASE_2"/>
    <property type="match status" value="1"/>
</dbReference>
<comment type="function">
    <text evidence="1">Catalyzes the rate-limiting reaction in the mitochondrial fatty acid synthesis (FAS) type II pathway. Responsible for the production of the mitochondrial malonyl-CoA, used for the biosynthesis of the cofactor lipoic acid. This protein carries three functions: biotin carboxyl carrier protein, biotin carboxylase, and carboxyltransferase (By similarity).</text>
</comment>
<comment type="catalytic activity">
    <reaction>
        <text>hydrogencarbonate + acetyl-CoA + ATP = malonyl-CoA + ADP + phosphate + H(+)</text>
        <dbReference type="Rhea" id="RHEA:11308"/>
        <dbReference type="ChEBI" id="CHEBI:15378"/>
        <dbReference type="ChEBI" id="CHEBI:17544"/>
        <dbReference type="ChEBI" id="CHEBI:30616"/>
        <dbReference type="ChEBI" id="CHEBI:43474"/>
        <dbReference type="ChEBI" id="CHEBI:57288"/>
        <dbReference type="ChEBI" id="CHEBI:57384"/>
        <dbReference type="ChEBI" id="CHEBI:456216"/>
        <dbReference type="EC" id="6.4.1.2"/>
    </reaction>
</comment>
<comment type="catalytic activity">
    <reaction>
        <text>N(6)-biotinyl-L-lysyl-[protein] + hydrogencarbonate + ATP = N(6)-carboxybiotinyl-L-lysyl-[protein] + ADP + phosphate + H(+)</text>
        <dbReference type="Rhea" id="RHEA:13501"/>
        <dbReference type="Rhea" id="RHEA-COMP:10505"/>
        <dbReference type="Rhea" id="RHEA-COMP:10506"/>
        <dbReference type="ChEBI" id="CHEBI:15378"/>
        <dbReference type="ChEBI" id="CHEBI:17544"/>
        <dbReference type="ChEBI" id="CHEBI:30616"/>
        <dbReference type="ChEBI" id="CHEBI:43474"/>
        <dbReference type="ChEBI" id="CHEBI:83144"/>
        <dbReference type="ChEBI" id="CHEBI:83145"/>
        <dbReference type="ChEBI" id="CHEBI:456216"/>
        <dbReference type="EC" id="6.3.4.14"/>
    </reaction>
</comment>
<comment type="cofactor">
    <cofactor evidence="1">
        <name>biotin</name>
        <dbReference type="ChEBI" id="CHEBI:57586"/>
    </cofactor>
</comment>
<comment type="pathway">
    <text>Lipid metabolism; malonyl-CoA biosynthesis; malonyl-CoA from acetyl-CoA: step 1/1.</text>
</comment>
<comment type="subcellular location">
    <subcellularLocation>
        <location evidence="1">Mitochondrion</location>
    </subcellularLocation>
</comment>
<comment type="caution">
    <text evidence="8">The reading frame from which this protein is translated has no Met initiation codon near to the 5'-end. However, it is not a pseudogene. It has been shown that at least 72 residues upstream of the first in-frame start codon (Met-151) are required for function and proper subcellular location. May be translated by means of alternative initiation codon usage, programmed translational frame shifting, or mRNA editing.</text>
</comment>
<comment type="sequence caution" evidence="8">
    <conflict type="erroneous initiation">
        <sequence resource="EMBL-CDS" id="EEU06674"/>
    </conflict>
</comment>
<name>HFA1_YEAS2</name>
<organism>
    <name type="scientific">Saccharomyces cerevisiae (strain JAY291)</name>
    <name type="common">Baker's yeast</name>
    <dbReference type="NCBI Taxonomy" id="574961"/>
    <lineage>
        <taxon>Eukaryota</taxon>
        <taxon>Fungi</taxon>
        <taxon>Dikarya</taxon>
        <taxon>Ascomycota</taxon>
        <taxon>Saccharomycotina</taxon>
        <taxon>Saccharomycetes</taxon>
        <taxon>Saccharomycetales</taxon>
        <taxon>Saccharomycetaceae</taxon>
        <taxon>Saccharomyces</taxon>
    </lineage>
</organism>
<accession>C7GRE4</accession>
<gene>
    <name type="primary">HFA1</name>
    <name type="ORF">C1Q_02929</name>
</gene>
<protein>
    <recommendedName>
        <fullName>Acetyl-CoA carboxylase, mitochondrial</fullName>
        <shortName>ACC</shortName>
        <ecNumber>6.4.1.2</ecNumber>
    </recommendedName>
    <domain>
        <recommendedName>
            <fullName>Biotin carboxylase</fullName>
            <ecNumber>6.3.4.14</ecNumber>
        </recommendedName>
    </domain>
</protein>
<proteinExistence type="inferred from homology"/>
<keyword id="KW-0067">ATP-binding</keyword>
<keyword id="KW-0092">Biotin</keyword>
<keyword id="KW-0275">Fatty acid biosynthesis</keyword>
<keyword id="KW-0276">Fatty acid metabolism</keyword>
<keyword id="KW-0436">Ligase</keyword>
<keyword id="KW-0444">Lipid biosynthesis</keyword>
<keyword id="KW-0443">Lipid metabolism</keyword>
<keyword id="KW-0496">Mitochondrion</keyword>
<keyword id="KW-0511">Multifunctional enzyme</keyword>
<keyword id="KW-0547">Nucleotide-binding</keyword>
<keyword id="KW-0809">Transit peptide</keyword>
<feature type="transit peptide" description="Mitochondrion" evidence="2">
    <location>
        <begin position="1"/>
        <end position="104"/>
    </location>
</feature>
<feature type="chain" id="PRO_0000392100" description="Acetyl-CoA carboxylase, mitochondrial">
    <location>
        <begin position="105"/>
        <end position="2273"/>
    </location>
</feature>
<feature type="domain" description="Biotin carboxylation">
    <location>
        <begin position="134"/>
        <end position="635"/>
    </location>
</feature>
<feature type="domain" description="ATP-grasp" evidence="3">
    <location>
        <begin position="292"/>
        <end position="484"/>
    </location>
</feature>
<feature type="domain" description="Biotinyl-binding" evidence="4">
    <location>
        <begin position="763"/>
        <end position="837"/>
    </location>
</feature>
<feature type="domain" description="CoA carboxyltransferase N-terminal" evidence="5">
    <location>
        <begin position="1532"/>
        <end position="1867"/>
    </location>
</feature>
<feature type="domain" description="CoA carboxyltransferase C-terminal" evidence="6">
    <location>
        <begin position="1871"/>
        <end position="2187"/>
    </location>
</feature>
<feature type="region of interest" description="Carboxyltransferase" evidence="7">
    <location>
        <begin position="1532"/>
        <end position="2187"/>
    </location>
</feature>
<feature type="active site" evidence="1">
    <location>
        <position position="459"/>
    </location>
</feature>
<feature type="binding site" evidence="3">
    <location>
        <begin position="332"/>
        <end position="337"/>
    </location>
    <ligand>
        <name>ATP</name>
        <dbReference type="ChEBI" id="CHEBI:30616"/>
    </ligand>
</feature>
<feature type="binding site" evidence="1">
    <location>
        <position position="1776"/>
    </location>
    <ligand>
        <name>CoA</name>
        <dbReference type="ChEBI" id="CHEBI:57287"/>
    </ligand>
</feature>
<feature type="binding site" evidence="1">
    <location>
        <position position="2080"/>
    </location>
    <ligand>
        <name>CoA</name>
        <dbReference type="ChEBI" id="CHEBI:57287"/>
    </ligand>
</feature>
<feature type="binding site" evidence="1">
    <location>
        <position position="2082"/>
    </location>
    <ligand>
        <name>CoA</name>
        <dbReference type="ChEBI" id="CHEBI:57287"/>
    </ligand>
</feature>
<feature type="modified residue" description="N6-biotinyllysine" evidence="1 4">
    <location>
        <position position="804"/>
    </location>
</feature>